<protein>
    <recommendedName>
        <fullName evidence="1">UPF0434 protein PBPRA2383</fullName>
    </recommendedName>
</protein>
<keyword id="KW-1185">Reference proteome</keyword>
<name>Y2383_PHOPR</name>
<gene>
    <name type="ordered locus">PBPRA2383</name>
</gene>
<dbReference type="EMBL" id="CR378670">
    <property type="protein sequence ID" value="CAG20768.1"/>
    <property type="molecule type" value="Genomic_DNA"/>
</dbReference>
<dbReference type="RefSeq" id="WP_006233570.1">
    <property type="nucleotide sequence ID" value="NC_006370.1"/>
</dbReference>
<dbReference type="SMR" id="Q6LPK8"/>
<dbReference type="STRING" id="298386.PBPRA2383"/>
<dbReference type="KEGG" id="ppr:PBPRA2383"/>
<dbReference type="eggNOG" id="COG2835">
    <property type="taxonomic scope" value="Bacteria"/>
</dbReference>
<dbReference type="HOGENOM" id="CLU_155659_3_1_6"/>
<dbReference type="Proteomes" id="UP000000593">
    <property type="component" value="Chromosome 1"/>
</dbReference>
<dbReference type="GO" id="GO:0005829">
    <property type="term" value="C:cytosol"/>
    <property type="evidence" value="ECO:0007669"/>
    <property type="project" value="TreeGrafter"/>
</dbReference>
<dbReference type="FunFam" id="2.20.25.10:FF:000002">
    <property type="entry name" value="UPF0434 protein YcaR"/>
    <property type="match status" value="1"/>
</dbReference>
<dbReference type="Gene3D" id="2.20.25.10">
    <property type="match status" value="1"/>
</dbReference>
<dbReference type="HAMAP" id="MF_01187">
    <property type="entry name" value="UPF0434"/>
    <property type="match status" value="1"/>
</dbReference>
<dbReference type="InterPro" id="IPR005651">
    <property type="entry name" value="Trm112-like"/>
</dbReference>
<dbReference type="PANTHER" id="PTHR33505:SF4">
    <property type="entry name" value="PROTEIN PREY, MITOCHONDRIAL"/>
    <property type="match status" value="1"/>
</dbReference>
<dbReference type="PANTHER" id="PTHR33505">
    <property type="entry name" value="ZGC:162634"/>
    <property type="match status" value="1"/>
</dbReference>
<dbReference type="Pfam" id="PF03966">
    <property type="entry name" value="Trm112p"/>
    <property type="match status" value="1"/>
</dbReference>
<dbReference type="SUPFAM" id="SSF158997">
    <property type="entry name" value="Trm112p-like"/>
    <property type="match status" value="1"/>
</dbReference>
<sequence length="59" mass="6759">MDHRLLEIVACPVCKGKLNYDKEKNELICKFDRLAYPIQDGIPVLIEPEARTLSSDEVK</sequence>
<comment type="similarity">
    <text evidence="1">Belongs to the UPF0434 family.</text>
</comment>
<organism>
    <name type="scientific">Photobacterium profundum (strain SS9)</name>
    <dbReference type="NCBI Taxonomy" id="298386"/>
    <lineage>
        <taxon>Bacteria</taxon>
        <taxon>Pseudomonadati</taxon>
        <taxon>Pseudomonadota</taxon>
        <taxon>Gammaproteobacteria</taxon>
        <taxon>Vibrionales</taxon>
        <taxon>Vibrionaceae</taxon>
        <taxon>Photobacterium</taxon>
    </lineage>
</organism>
<accession>Q6LPK8</accession>
<proteinExistence type="inferred from homology"/>
<reference key="1">
    <citation type="journal article" date="2005" name="Science">
        <title>Life at depth: Photobacterium profundum genome sequence and expression analysis.</title>
        <authorList>
            <person name="Vezzi A."/>
            <person name="Campanaro S."/>
            <person name="D'Angelo M."/>
            <person name="Simonato F."/>
            <person name="Vitulo N."/>
            <person name="Lauro F.M."/>
            <person name="Cestaro A."/>
            <person name="Malacrida G."/>
            <person name="Simionati B."/>
            <person name="Cannata N."/>
            <person name="Romualdi C."/>
            <person name="Bartlett D.H."/>
            <person name="Valle G."/>
        </authorList>
    </citation>
    <scope>NUCLEOTIDE SEQUENCE [LARGE SCALE GENOMIC DNA]</scope>
    <source>
        <strain>ATCC BAA-1253 / SS9</strain>
    </source>
</reference>
<feature type="chain" id="PRO_0000291125" description="UPF0434 protein PBPRA2383">
    <location>
        <begin position="1"/>
        <end position="59"/>
    </location>
</feature>
<evidence type="ECO:0000255" key="1">
    <source>
        <dbReference type="HAMAP-Rule" id="MF_01187"/>
    </source>
</evidence>